<proteinExistence type="inferred from homology"/>
<protein>
    <recommendedName>
        <fullName evidence="1">Glutamate--tRNA ligase</fullName>
        <ecNumber evidence="1">6.1.1.17</ecNumber>
    </recommendedName>
    <alternativeName>
        <fullName evidence="1">Glutamyl-tRNA synthetase</fullName>
        <shortName evidence="1">GluRS</shortName>
    </alternativeName>
</protein>
<sequence>MNKMIPRVRFAPSPTGFLHVGGARTALFNWLYARHFKGTFILRIEDTDQSRNTPQALSVIFDNLSWLGLDWDEGPLPDGSSKGQFGPYFQSQRKEIYNEYCNRLIAKELAYIKDEAVYFRMPRKRIIVSDLICGDIYFDCSLEKDFVIRRKDGSFVFHLVNVVDDLEMQISHVIRGEDHLSNTPKHIALFEALGMSPPLYAHIPLILNPSGTKMSKRDKGSSVQEYIDEGFLPQAFRNYLCLLGWSLKENREIFGIEEAIAKFDLPQIHRSNARFNHQKLLWINGEYMRSLPLDELYPHAFFWLKKAGLIDQNTDCSFLKQAVGIVREKVKTGKELVEWMKPLLSDTLQYDEAVVQQYLDDKGKEILREALPYLEEVSSFQAKELEAIIKNLSLKMGRKTADYIHRLRVALTGRTVGPSLYPMLEVLGKQKVLNRLYKVVGPKE</sequence>
<accession>B3DXK4</accession>
<name>SYE_METI4</name>
<comment type="function">
    <text evidence="1">Catalyzes the attachment of glutamate to tRNA(Glu) in a two-step reaction: glutamate is first activated by ATP to form Glu-AMP and then transferred to the acceptor end of tRNA(Glu).</text>
</comment>
<comment type="catalytic activity">
    <reaction evidence="1">
        <text>tRNA(Glu) + L-glutamate + ATP = L-glutamyl-tRNA(Glu) + AMP + diphosphate</text>
        <dbReference type="Rhea" id="RHEA:23540"/>
        <dbReference type="Rhea" id="RHEA-COMP:9663"/>
        <dbReference type="Rhea" id="RHEA-COMP:9680"/>
        <dbReference type="ChEBI" id="CHEBI:29985"/>
        <dbReference type="ChEBI" id="CHEBI:30616"/>
        <dbReference type="ChEBI" id="CHEBI:33019"/>
        <dbReference type="ChEBI" id="CHEBI:78442"/>
        <dbReference type="ChEBI" id="CHEBI:78520"/>
        <dbReference type="ChEBI" id="CHEBI:456215"/>
        <dbReference type="EC" id="6.1.1.17"/>
    </reaction>
</comment>
<comment type="subunit">
    <text evidence="1">Monomer.</text>
</comment>
<comment type="subcellular location">
    <subcellularLocation>
        <location evidence="1">Cytoplasm</location>
    </subcellularLocation>
</comment>
<comment type="similarity">
    <text evidence="1">Belongs to the class-I aminoacyl-tRNA synthetase family. Glutamate--tRNA ligase type 1 subfamily.</text>
</comment>
<reference key="1">
    <citation type="journal article" date="2008" name="Biol. Direct">
        <title>Complete genome sequence of the extremely acidophilic methanotroph isolate V4, Methylacidiphilum infernorum, a representative of the bacterial phylum Verrucomicrobia.</title>
        <authorList>
            <person name="Hou S."/>
            <person name="Makarova K.S."/>
            <person name="Saw J.H."/>
            <person name="Senin P."/>
            <person name="Ly B.V."/>
            <person name="Zhou Z."/>
            <person name="Ren Y."/>
            <person name="Wang J."/>
            <person name="Galperin M.Y."/>
            <person name="Omelchenko M.V."/>
            <person name="Wolf Y.I."/>
            <person name="Yutin N."/>
            <person name="Koonin E.V."/>
            <person name="Stott M.B."/>
            <person name="Mountain B.W."/>
            <person name="Crowe M.A."/>
            <person name="Smirnova A.V."/>
            <person name="Dunfield P.F."/>
            <person name="Feng L."/>
            <person name="Wang L."/>
            <person name="Alam M."/>
        </authorList>
    </citation>
    <scope>NUCLEOTIDE SEQUENCE [LARGE SCALE GENOMIC DNA]</scope>
    <source>
        <strain>Isolate V4</strain>
    </source>
</reference>
<gene>
    <name evidence="1" type="primary">gltX</name>
    <name type="ordered locus">Minf_0178</name>
</gene>
<organism>
    <name type="scientific">Methylacidiphilum infernorum (isolate V4)</name>
    <name type="common">Methylokorus infernorum (strain V4)</name>
    <dbReference type="NCBI Taxonomy" id="481448"/>
    <lineage>
        <taxon>Bacteria</taxon>
        <taxon>Pseudomonadati</taxon>
        <taxon>Verrucomicrobiota</taxon>
        <taxon>Methylacidiphilae</taxon>
        <taxon>Methylacidiphilales</taxon>
        <taxon>Methylacidiphilaceae</taxon>
        <taxon>Methylacidiphilum (ex Ratnadevi et al. 2023)</taxon>
    </lineage>
</organism>
<feature type="chain" id="PRO_0000367707" description="Glutamate--tRNA ligase">
    <location>
        <begin position="1"/>
        <end position="444"/>
    </location>
</feature>
<feature type="short sequence motif" description="'HIGH' region" evidence="1">
    <location>
        <begin position="12"/>
        <end position="22"/>
    </location>
</feature>
<feature type="short sequence motif" description="'KMSKS' region" evidence="1">
    <location>
        <begin position="213"/>
        <end position="217"/>
    </location>
</feature>
<feature type="binding site" evidence="1">
    <location>
        <position position="216"/>
    </location>
    <ligand>
        <name>ATP</name>
        <dbReference type="ChEBI" id="CHEBI:30616"/>
    </ligand>
</feature>
<dbReference type="EC" id="6.1.1.17" evidence="1"/>
<dbReference type="EMBL" id="CP000975">
    <property type="protein sequence ID" value="ACD82238.1"/>
    <property type="molecule type" value="Genomic_DNA"/>
</dbReference>
<dbReference type="RefSeq" id="WP_012462520.1">
    <property type="nucleotide sequence ID" value="NC_010794.1"/>
</dbReference>
<dbReference type="SMR" id="B3DXK4"/>
<dbReference type="STRING" id="481448.Minf_0178"/>
<dbReference type="KEGG" id="min:Minf_0178"/>
<dbReference type="eggNOG" id="COG0008">
    <property type="taxonomic scope" value="Bacteria"/>
</dbReference>
<dbReference type="eggNOG" id="COG1384">
    <property type="taxonomic scope" value="Bacteria"/>
</dbReference>
<dbReference type="HOGENOM" id="CLU_015768_6_3_0"/>
<dbReference type="OrthoDB" id="9807503at2"/>
<dbReference type="Proteomes" id="UP000009149">
    <property type="component" value="Chromosome"/>
</dbReference>
<dbReference type="GO" id="GO:0005829">
    <property type="term" value="C:cytosol"/>
    <property type="evidence" value="ECO:0007669"/>
    <property type="project" value="TreeGrafter"/>
</dbReference>
<dbReference type="GO" id="GO:0005524">
    <property type="term" value="F:ATP binding"/>
    <property type="evidence" value="ECO:0007669"/>
    <property type="project" value="UniProtKB-UniRule"/>
</dbReference>
<dbReference type="GO" id="GO:0004818">
    <property type="term" value="F:glutamate-tRNA ligase activity"/>
    <property type="evidence" value="ECO:0007669"/>
    <property type="project" value="UniProtKB-UniRule"/>
</dbReference>
<dbReference type="GO" id="GO:0000049">
    <property type="term" value="F:tRNA binding"/>
    <property type="evidence" value="ECO:0007669"/>
    <property type="project" value="InterPro"/>
</dbReference>
<dbReference type="GO" id="GO:0008270">
    <property type="term" value="F:zinc ion binding"/>
    <property type="evidence" value="ECO:0007669"/>
    <property type="project" value="InterPro"/>
</dbReference>
<dbReference type="GO" id="GO:0006424">
    <property type="term" value="P:glutamyl-tRNA aminoacylation"/>
    <property type="evidence" value="ECO:0007669"/>
    <property type="project" value="UniProtKB-UniRule"/>
</dbReference>
<dbReference type="CDD" id="cd00808">
    <property type="entry name" value="GluRS_core"/>
    <property type="match status" value="1"/>
</dbReference>
<dbReference type="Gene3D" id="1.10.10.350">
    <property type="match status" value="1"/>
</dbReference>
<dbReference type="Gene3D" id="3.40.50.620">
    <property type="entry name" value="HUPs"/>
    <property type="match status" value="2"/>
</dbReference>
<dbReference type="HAMAP" id="MF_00022">
    <property type="entry name" value="Glu_tRNA_synth_type1"/>
    <property type="match status" value="1"/>
</dbReference>
<dbReference type="InterPro" id="IPR045462">
    <property type="entry name" value="aa-tRNA-synth_I_cd-bd"/>
</dbReference>
<dbReference type="InterPro" id="IPR020751">
    <property type="entry name" value="aa-tRNA-synth_I_codon-bd_sub2"/>
</dbReference>
<dbReference type="InterPro" id="IPR001412">
    <property type="entry name" value="aa-tRNA-synth_I_CS"/>
</dbReference>
<dbReference type="InterPro" id="IPR008925">
    <property type="entry name" value="aa_tRNA-synth_I_cd-bd_sf"/>
</dbReference>
<dbReference type="InterPro" id="IPR004527">
    <property type="entry name" value="Glu-tRNA-ligase_bac/mito"/>
</dbReference>
<dbReference type="InterPro" id="IPR000924">
    <property type="entry name" value="Glu/Gln-tRNA-synth"/>
</dbReference>
<dbReference type="InterPro" id="IPR020058">
    <property type="entry name" value="Glu/Gln-tRNA-synth_Ib_cat-dom"/>
</dbReference>
<dbReference type="InterPro" id="IPR049940">
    <property type="entry name" value="GluQ/Sye"/>
</dbReference>
<dbReference type="InterPro" id="IPR033910">
    <property type="entry name" value="GluRS_core"/>
</dbReference>
<dbReference type="InterPro" id="IPR014729">
    <property type="entry name" value="Rossmann-like_a/b/a_fold"/>
</dbReference>
<dbReference type="PANTHER" id="PTHR43311">
    <property type="entry name" value="GLUTAMATE--TRNA LIGASE"/>
    <property type="match status" value="1"/>
</dbReference>
<dbReference type="PANTHER" id="PTHR43311:SF2">
    <property type="entry name" value="GLUTAMATE--TRNA LIGASE, MITOCHONDRIAL-RELATED"/>
    <property type="match status" value="1"/>
</dbReference>
<dbReference type="Pfam" id="PF19269">
    <property type="entry name" value="Anticodon_2"/>
    <property type="match status" value="1"/>
</dbReference>
<dbReference type="Pfam" id="PF00749">
    <property type="entry name" value="tRNA-synt_1c"/>
    <property type="match status" value="2"/>
</dbReference>
<dbReference type="PRINTS" id="PR00987">
    <property type="entry name" value="TRNASYNTHGLU"/>
</dbReference>
<dbReference type="SUPFAM" id="SSF48163">
    <property type="entry name" value="An anticodon-binding domain of class I aminoacyl-tRNA synthetases"/>
    <property type="match status" value="1"/>
</dbReference>
<dbReference type="SUPFAM" id="SSF52374">
    <property type="entry name" value="Nucleotidylyl transferase"/>
    <property type="match status" value="1"/>
</dbReference>
<dbReference type="PROSITE" id="PS00178">
    <property type="entry name" value="AA_TRNA_LIGASE_I"/>
    <property type="match status" value="1"/>
</dbReference>
<evidence type="ECO:0000255" key="1">
    <source>
        <dbReference type="HAMAP-Rule" id="MF_00022"/>
    </source>
</evidence>
<keyword id="KW-0030">Aminoacyl-tRNA synthetase</keyword>
<keyword id="KW-0067">ATP-binding</keyword>
<keyword id="KW-0963">Cytoplasm</keyword>
<keyword id="KW-0436">Ligase</keyword>
<keyword id="KW-0547">Nucleotide-binding</keyword>
<keyword id="KW-0648">Protein biosynthesis</keyword>